<keyword id="KW-0325">Glycoprotein</keyword>
<keyword id="KW-1185">Reference proteome</keyword>
<keyword id="KW-0964">Secreted</keyword>
<keyword id="KW-0732">Signal</keyword>
<protein>
    <recommendedName>
        <fullName>Colossin-C</fullName>
    </recommendedName>
</protein>
<proteinExistence type="inferred from homology"/>
<organism>
    <name type="scientific">Dictyostelium discoideum</name>
    <name type="common">Social amoeba</name>
    <dbReference type="NCBI Taxonomy" id="44689"/>
    <lineage>
        <taxon>Eukaryota</taxon>
        <taxon>Amoebozoa</taxon>
        <taxon>Evosea</taxon>
        <taxon>Eumycetozoa</taxon>
        <taxon>Dictyostelia</taxon>
        <taxon>Dictyosteliales</taxon>
        <taxon>Dictyosteliaceae</taxon>
        <taxon>Dictyostelium</taxon>
    </lineage>
</organism>
<sequence length="981" mass="106068">MKILYSLLLISSIILNTVLNISSQVYDQRILALKGKCYLDSNKNALYDEGEPGFGNVEISLGNATDYKGNKYPIRYSSADGTFIYDGLTQRTTYEFTFTNPKDYYFETYEKTLACPPGVPCIRPTVSADNLAADLLVANTFAYNIPLIKQVGVSSGSSILTVRISVDLGYVEQTQPPTQPPTQPPTQPPTPPPFTGSAVAGLLFTDINGNGIFDGRDVWTSNVSVGLYNFNDKTRALDVNGNVISSITTDANGRYAFENVANGVYCLWMEGTKYFNPGCVGRIEINSATMPKSVASDGVQSPTILRAGSFSLFLTGNSGYGGYAYNDIDLNGYLSSRDQGIAGIIVKIYLPVYNFLFGTVTTDSNGRWSFSGLQPGFPVRIEFVIPNDFTSTGANLVNFVTVGQSIDLSIGLIPKSLTGVNAGPSNPKSFVTTCFVKGSYNGKYKDEPTVVEINKDAQGKAYAQQSADYMKVLASHKDTGSVHGVAFNPDNGDKFVSSYHKTNSDFGPSGSCAIYKLSSGIITTHVNFNDVFGKSYCGGYAHYFDFREISTAGPLVGKASLGQMTYYNKKLYVTNLGKNEILVVPIYQNPNATNVERIPVANPGCSSGDDWHIFPVTVFQGELFTGGVCSGEKGSRLSTYILKYNPNSKSFSTVLFYTLGYARGCRYLDSFGSCVSSVWQKWSNNDSPQALLSTIIFDVSGHLIMAYKDRSGDISAVVSAPELLIACLGTDGLFYLESGGKCGSLVGAGVDQKSLTGLRYGPGNGNFFDNHKTGLHDYTNAFGATKGGRDIIVTTGFDYYEAFEGSIRWYNATSGKQLKGYSLYITSSNGRTPSPTFGKQNGLGDITSVYDSSLPQYRVGRVWLDINGNGIQDAGEPGISGITVFLIYGQQSTPTSQTVSDSNGYFKFEVDFSSNYYCVIPVAFFQAGSSITMRNADPTHPNTNSDAFLSTVDNVYVTSFTSSDAGGYYFNGCSFGIIPKK</sequence>
<gene>
    <name type="primary">colC</name>
    <name type="ORF">DDB_G0281507</name>
</gene>
<evidence type="ECO:0000255" key="1"/>
<evidence type="ECO:0000256" key="2">
    <source>
        <dbReference type="SAM" id="MobiDB-lite"/>
    </source>
</evidence>
<evidence type="ECO:0000305" key="3"/>
<reference key="1">
    <citation type="journal article" date="2005" name="Nature">
        <title>The genome of the social amoeba Dictyostelium discoideum.</title>
        <authorList>
            <person name="Eichinger L."/>
            <person name="Pachebat J.A."/>
            <person name="Gloeckner G."/>
            <person name="Rajandream M.A."/>
            <person name="Sucgang R."/>
            <person name="Berriman M."/>
            <person name="Song J."/>
            <person name="Olsen R."/>
            <person name="Szafranski K."/>
            <person name="Xu Q."/>
            <person name="Tunggal B."/>
            <person name="Kummerfeld S."/>
            <person name="Madera M."/>
            <person name="Konfortov B.A."/>
            <person name="Rivero F."/>
            <person name="Bankier A.T."/>
            <person name="Lehmann R."/>
            <person name="Hamlin N."/>
            <person name="Davies R."/>
            <person name="Gaudet P."/>
            <person name="Fey P."/>
            <person name="Pilcher K."/>
            <person name="Chen G."/>
            <person name="Saunders D."/>
            <person name="Sodergren E.J."/>
            <person name="Davis P."/>
            <person name="Kerhornou A."/>
            <person name="Nie X."/>
            <person name="Hall N."/>
            <person name="Anjard C."/>
            <person name="Hemphill L."/>
            <person name="Bason N."/>
            <person name="Farbrother P."/>
            <person name="Desany B."/>
            <person name="Just E."/>
            <person name="Morio T."/>
            <person name="Rost R."/>
            <person name="Churcher C.M."/>
            <person name="Cooper J."/>
            <person name="Haydock S."/>
            <person name="van Driessche N."/>
            <person name="Cronin A."/>
            <person name="Goodhead I."/>
            <person name="Muzny D.M."/>
            <person name="Mourier T."/>
            <person name="Pain A."/>
            <person name="Lu M."/>
            <person name="Harper D."/>
            <person name="Lindsay R."/>
            <person name="Hauser H."/>
            <person name="James K.D."/>
            <person name="Quiles M."/>
            <person name="Madan Babu M."/>
            <person name="Saito T."/>
            <person name="Buchrieser C."/>
            <person name="Wardroper A."/>
            <person name="Felder M."/>
            <person name="Thangavelu M."/>
            <person name="Johnson D."/>
            <person name="Knights A."/>
            <person name="Loulseged H."/>
            <person name="Mungall K.L."/>
            <person name="Oliver K."/>
            <person name="Price C."/>
            <person name="Quail M.A."/>
            <person name="Urushihara H."/>
            <person name="Hernandez J."/>
            <person name="Rabbinowitsch E."/>
            <person name="Steffen D."/>
            <person name="Sanders M."/>
            <person name="Ma J."/>
            <person name="Kohara Y."/>
            <person name="Sharp S."/>
            <person name="Simmonds M.N."/>
            <person name="Spiegler S."/>
            <person name="Tivey A."/>
            <person name="Sugano S."/>
            <person name="White B."/>
            <person name="Walker D."/>
            <person name="Woodward J.R."/>
            <person name="Winckler T."/>
            <person name="Tanaka Y."/>
            <person name="Shaulsky G."/>
            <person name="Schleicher M."/>
            <person name="Weinstock G.M."/>
            <person name="Rosenthal A."/>
            <person name="Cox E.C."/>
            <person name="Chisholm R.L."/>
            <person name="Gibbs R.A."/>
            <person name="Loomis W.F."/>
            <person name="Platzer M."/>
            <person name="Kay R.R."/>
            <person name="Williams J.G."/>
            <person name="Dear P.H."/>
            <person name="Noegel A.A."/>
            <person name="Barrell B.G."/>
            <person name="Kuspa A."/>
        </authorList>
    </citation>
    <scope>NUCLEOTIDE SEQUENCE [LARGE SCALE GENOMIC DNA]</scope>
    <source>
        <strain>AX4</strain>
    </source>
</reference>
<accession>Q54TT6</accession>
<dbReference type="EMBL" id="AAFI02000041">
    <property type="protein sequence ID" value="EAL66735.1"/>
    <property type="molecule type" value="Genomic_DNA"/>
</dbReference>
<dbReference type="RefSeq" id="XP_640725.1">
    <property type="nucleotide sequence ID" value="XM_635633.1"/>
</dbReference>
<dbReference type="FunCoup" id="Q54TT6">
    <property type="interactions" value="126"/>
</dbReference>
<dbReference type="GlyCosmos" id="Q54TT6">
    <property type="glycosylation" value="4 sites, No reported glycans"/>
</dbReference>
<dbReference type="GlyGen" id="Q54TT6">
    <property type="glycosylation" value="7 sites"/>
</dbReference>
<dbReference type="PaxDb" id="44689-DDB0237870"/>
<dbReference type="EnsemblProtists" id="EAL66735">
    <property type="protein sequence ID" value="EAL66735"/>
    <property type="gene ID" value="DDB_G0281507"/>
</dbReference>
<dbReference type="GeneID" id="8623114"/>
<dbReference type="KEGG" id="ddi:DDB_G0281507"/>
<dbReference type="dictyBase" id="DDB_G0281507">
    <property type="gene designation" value="colC"/>
</dbReference>
<dbReference type="VEuPathDB" id="AmoebaDB:DDB_G0281507"/>
<dbReference type="eggNOG" id="ENOG502RSUB">
    <property type="taxonomic scope" value="Eukaryota"/>
</dbReference>
<dbReference type="HOGENOM" id="CLU_303564_0_0_1"/>
<dbReference type="InParanoid" id="Q54TT6"/>
<dbReference type="OMA" id="IYDGLTQ"/>
<dbReference type="PhylomeDB" id="Q54TT6"/>
<dbReference type="PRO" id="PR:Q54TT6"/>
<dbReference type="Proteomes" id="UP000002195">
    <property type="component" value="Chromosome 3"/>
</dbReference>
<dbReference type="GO" id="GO:0031012">
    <property type="term" value="C:extracellular matrix"/>
    <property type="evidence" value="ECO:0007005"/>
    <property type="project" value="dictyBase"/>
</dbReference>
<dbReference type="GO" id="GO:0005576">
    <property type="term" value="C:extracellular region"/>
    <property type="evidence" value="ECO:0007669"/>
    <property type="project" value="UniProtKB-SubCell"/>
</dbReference>
<dbReference type="Gene3D" id="2.60.40.10">
    <property type="entry name" value="Immunoglobulins"/>
    <property type="match status" value="4"/>
</dbReference>
<dbReference type="InterPro" id="IPR013783">
    <property type="entry name" value="Ig-like_fold"/>
</dbReference>
<dbReference type="InterPro" id="IPR033764">
    <property type="entry name" value="Sdr_B"/>
</dbReference>
<dbReference type="PANTHER" id="PTHR36108">
    <property type="entry name" value="COLOSSIN-B-RELATED"/>
    <property type="match status" value="1"/>
</dbReference>
<dbReference type="PANTHER" id="PTHR36108:SF17">
    <property type="entry name" value="COLOSSIN-C"/>
    <property type="match status" value="1"/>
</dbReference>
<dbReference type="Pfam" id="PF17210">
    <property type="entry name" value="SdrD_B"/>
    <property type="match status" value="3"/>
</dbReference>
<dbReference type="SUPFAM" id="SSF117074">
    <property type="entry name" value="Hypothetical protein PA1324"/>
    <property type="match status" value="4"/>
</dbReference>
<dbReference type="SUPFAM" id="SSF63825">
    <property type="entry name" value="YWTD domain"/>
    <property type="match status" value="1"/>
</dbReference>
<name>COLC_DICDI</name>
<comment type="subcellular location">
    <subcellularLocation>
        <location evidence="3">Secreted</location>
    </subcellularLocation>
</comment>
<comment type="similarity">
    <text evidence="3">Belongs to the serine-aspartate repeat-containing protein (SDr) family.</text>
</comment>
<feature type="signal peptide" evidence="1">
    <location>
        <begin position="1"/>
        <end position="23"/>
    </location>
</feature>
<feature type="chain" id="PRO_0000388251" description="Colossin-C">
    <location>
        <begin position="24"/>
        <end position="981"/>
    </location>
</feature>
<feature type="region of interest" description="Disordered" evidence="2">
    <location>
        <begin position="172"/>
        <end position="195"/>
    </location>
</feature>
<feature type="compositionally biased region" description="Pro residues" evidence="2">
    <location>
        <begin position="177"/>
        <end position="194"/>
    </location>
</feature>
<feature type="glycosylation site" description="N-linked (GlcNAc...) asparagine" evidence="1">
    <location>
        <position position="63"/>
    </location>
</feature>
<feature type="glycosylation site" description="N-linked (GlcNAc...) asparagine" evidence="1">
    <location>
        <position position="222"/>
    </location>
</feature>
<feature type="glycosylation site" description="N-linked (GlcNAc...) asparagine" evidence="1">
    <location>
        <position position="591"/>
    </location>
</feature>
<feature type="glycosylation site" description="N-linked (GlcNAc...) asparagine" evidence="1">
    <location>
        <position position="811"/>
    </location>
</feature>